<protein>
    <recommendedName>
        <fullName>Apolipoprotein A-I</fullName>
        <shortName>Apo-AI</shortName>
        <shortName>ApoA-I</shortName>
    </recommendedName>
    <alternativeName>
        <fullName>Apolipoprotein A1</fullName>
    </alternativeName>
    <component>
        <recommendedName>
            <fullName>Proapolipoprotein A-I</fullName>
            <shortName>ProapoA-I</shortName>
        </recommendedName>
    </component>
</protein>
<accession>O18759</accession>
<reference key="1">
    <citation type="submission" date="1997-05" db="EMBL/GenBank/DDBJ databases">
        <title>Cloning and sequencing of tree shrew apolipoprotein AI cDNA.</title>
        <authorList>
            <person name="Lu X."/>
            <person name="Chen B."/>
            <person name="Zhao Y."/>
            <person name="Wang K."/>
            <person name="Xue H."/>
            <person name="Zeng W."/>
        </authorList>
    </citation>
    <scope>NUCLEOTIDE SEQUENCE [MRNA]</scope>
    <source>
        <tissue>Liver</tissue>
    </source>
</reference>
<comment type="function">
    <text evidence="1">Participates in the reverse transport of cholesterol from tissues to the liver for excretion by promoting cholesterol efflux from tissues and by acting as a cofactor for the lecithin cholesterol acyltransferase (LCAT). As part of the SPAP complex, activates spermatozoa motility (By similarity).</text>
</comment>
<comment type="subunit">
    <text evidence="2 3 4">Homodimer (By similarity). Interacts with APOA1BP and CLU. Component of a sperm activating protein complex (SPAP), consisting of APOA1, an immunoglobulin heavy chain, an immunoglobulin light chain and albumin. Interacts with NDRG1. Interacts with SCGB3A2 (By similarity). Interacts with NAXE and YJEFN3 (By similarity).</text>
</comment>
<comment type="subcellular location">
    <subcellularLocation>
        <location>Secreted</location>
    </subcellularLocation>
</comment>
<comment type="tissue specificity">
    <text>Major protein of plasma HDL, also found in chylomicrons.</text>
</comment>
<comment type="PTM">
    <text evidence="1">Glycosylated.</text>
</comment>
<comment type="PTM">
    <text evidence="1">Palmitoylated.</text>
</comment>
<comment type="PTM">
    <text evidence="1">Phosphorylation sites are present in the extracellular medium.</text>
</comment>
<comment type="similarity">
    <text evidence="5">Belongs to the apolipoprotein A1/A4/E family.</text>
</comment>
<organism>
    <name type="scientific">Tupaia belangeri</name>
    <name type="common">Common tree shrew</name>
    <name type="synonym">Tupaia glis belangeri</name>
    <dbReference type="NCBI Taxonomy" id="37347"/>
    <lineage>
        <taxon>Eukaryota</taxon>
        <taxon>Metazoa</taxon>
        <taxon>Chordata</taxon>
        <taxon>Craniata</taxon>
        <taxon>Vertebrata</taxon>
        <taxon>Euteleostomi</taxon>
        <taxon>Mammalia</taxon>
        <taxon>Eutheria</taxon>
        <taxon>Euarchontoglires</taxon>
        <taxon>Scandentia</taxon>
        <taxon>Tupaiidae</taxon>
        <taxon>Tupaia</taxon>
    </lineage>
</organism>
<dbReference type="EMBL" id="AF005638">
    <property type="protein sequence ID" value="AAB82326.1"/>
    <property type="molecule type" value="mRNA"/>
</dbReference>
<dbReference type="SMR" id="O18759"/>
<dbReference type="GO" id="GO:0042627">
    <property type="term" value="C:chylomicron"/>
    <property type="evidence" value="ECO:0007669"/>
    <property type="project" value="TreeGrafter"/>
</dbReference>
<dbReference type="GO" id="GO:1903561">
    <property type="term" value="C:extracellular vesicle"/>
    <property type="evidence" value="ECO:0007669"/>
    <property type="project" value="TreeGrafter"/>
</dbReference>
<dbReference type="GO" id="GO:0034364">
    <property type="term" value="C:high-density lipoprotein particle"/>
    <property type="evidence" value="ECO:0007669"/>
    <property type="project" value="UniProtKB-KW"/>
</dbReference>
<dbReference type="GO" id="GO:0034362">
    <property type="term" value="C:low-density lipoprotein particle"/>
    <property type="evidence" value="ECO:0007669"/>
    <property type="project" value="TreeGrafter"/>
</dbReference>
<dbReference type="GO" id="GO:0034361">
    <property type="term" value="C:very-low-density lipoprotein particle"/>
    <property type="evidence" value="ECO:0007669"/>
    <property type="project" value="TreeGrafter"/>
</dbReference>
<dbReference type="GO" id="GO:0120020">
    <property type="term" value="F:cholesterol transfer activity"/>
    <property type="evidence" value="ECO:0007669"/>
    <property type="project" value="TreeGrafter"/>
</dbReference>
<dbReference type="GO" id="GO:0060228">
    <property type="term" value="F:phosphatidylcholine-sterol O-acyltransferase activator activity"/>
    <property type="evidence" value="ECO:0007669"/>
    <property type="project" value="TreeGrafter"/>
</dbReference>
<dbReference type="GO" id="GO:0005543">
    <property type="term" value="F:phospholipid binding"/>
    <property type="evidence" value="ECO:0007669"/>
    <property type="project" value="TreeGrafter"/>
</dbReference>
<dbReference type="GO" id="GO:0042803">
    <property type="term" value="F:protein homodimerization activity"/>
    <property type="evidence" value="ECO:0000250"/>
    <property type="project" value="UniProtKB"/>
</dbReference>
<dbReference type="GO" id="GO:0055090">
    <property type="term" value="P:acylglycerol homeostasis"/>
    <property type="evidence" value="ECO:0007669"/>
    <property type="project" value="TreeGrafter"/>
</dbReference>
<dbReference type="GO" id="GO:0033344">
    <property type="term" value="P:cholesterol efflux"/>
    <property type="evidence" value="ECO:0007669"/>
    <property type="project" value="TreeGrafter"/>
</dbReference>
<dbReference type="GO" id="GO:0008203">
    <property type="term" value="P:cholesterol metabolic process"/>
    <property type="evidence" value="ECO:0007669"/>
    <property type="project" value="UniProtKB-KW"/>
</dbReference>
<dbReference type="GO" id="GO:0042157">
    <property type="term" value="P:lipoprotein metabolic process"/>
    <property type="evidence" value="ECO:0007669"/>
    <property type="project" value="InterPro"/>
</dbReference>
<dbReference type="GO" id="GO:0033700">
    <property type="term" value="P:phospholipid efflux"/>
    <property type="evidence" value="ECO:0007669"/>
    <property type="project" value="TreeGrafter"/>
</dbReference>
<dbReference type="GO" id="GO:0010875">
    <property type="term" value="P:positive regulation of cholesterol efflux"/>
    <property type="evidence" value="ECO:0000250"/>
    <property type="project" value="UniProtKB"/>
</dbReference>
<dbReference type="GO" id="GO:0050766">
    <property type="term" value="P:positive regulation of phagocytosis"/>
    <property type="evidence" value="ECO:0000250"/>
    <property type="project" value="UniProtKB"/>
</dbReference>
<dbReference type="GO" id="GO:1902995">
    <property type="term" value="P:positive regulation of phospholipid efflux"/>
    <property type="evidence" value="ECO:0000250"/>
    <property type="project" value="UniProtKB"/>
</dbReference>
<dbReference type="GO" id="GO:0050821">
    <property type="term" value="P:protein stabilization"/>
    <property type="evidence" value="ECO:0000250"/>
    <property type="project" value="UniProtKB"/>
</dbReference>
<dbReference type="FunFam" id="1.20.120.20:FF:000001">
    <property type="entry name" value="Apolipoprotein A-I"/>
    <property type="match status" value="1"/>
</dbReference>
<dbReference type="FunFam" id="1.20.5.20:FF:000001">
    <property type="entry name" value="apolipoprotein A-I"/>
    <property type="match status" value="1"/>
</dbReference>
<dbReference type="Gene3D" id="1.20.5.20">
    <property type="match status" value="1"/>
</dbReference>
<dbReference type="Gene3D" id="6.10.140.380">
    <property type="match status" value="1"/>
</dbReference>
<dbReference type="Gene3D" id="1.20.120.20">
    <property type="entry name" value="Apolipoprotein"/>
    <property type="match status" value="1"/>
</dbReference>
<dbReference type="InterPro" id="IPR000074">
    <property type="entry name" value="ApoA_E"/>
</dbReference>
<dbReference type="InterPro" id="IPR050163">
    <property type="entry name" value="Apolipoprotein_A1/A4/E"/>
</dbReference>
<dbReference type="PANTHER" id="PTHR18976">
    <property type="entry name" value="APOLIPOPROTEIN"/>
    <property type="match status" value="1"/>
</dbReference>
<dbReference type="PANTHER" id="PTHR18976:SF11">
    <property type="entry name" value="APOLIPOPROTEIN A-I"/>
    <property type="match status" value="1"/>
</dbReference>
<dbReference type="Pfam" id="PF01442">
    <property type="entry name" value="Apolipoprotein"/>
    <property type="match status" value="1"/>
</dbReference>
<dbReference type="SUPFAM" id="SSF58113">
    <property type="entry name" value="Apolipoprotein A-I"/>
    <property type="match status" value="1"/>
</dbReference>
<proteinExistence type="evidence at transcript level"/>
<feature type="signal peptide" evidence="1">
    <location>
        <begin position="1"/>
        <end position="18"/>
    </location>
</feature>
<feature type="chain" id="PRO_0000425338" description="Proapolipoprotein A-I">
    <location>
        <begin position="19"/>
        <end position="265"/>
    </location>
</feature>
<feature type="chain" id="PRO_0000001956" description="Apolipoprotein A-I">
    <location>
        <begin position="25"/>
        <end position="265"/>
    </location>
</feature>
<feature type="repeat" description="1">
    <location>
        <begin position="67"/>
        <end position="88"/>
    </location>
</feature>
<feature type="repeat" description="2">
    <location>
        <begin position="89"/>
        <end position="110"/>
    </location>
</feature>
<feature type="repeat" description="3; half-length">
    <location>
        <begin position="111"/>
        <end position="121"/>
    </location>
</feature>
<feature type="repeat" description="4">
    <location>
        <begin position="122"/>
        <end position="143"/>
    </location>
</feature>
<feature type="repeat" description="5">
    <location>
        <begin position="144"/>
        <end position="165"/>
    </location>
</feature>
<feature type="repeat" description="6">
    <location>
        <begin position="166"/>
        <end position="187"/>
    </location>
</feature>
<feature type="repeat" description="7">
    <location>
        <begin position="188"/>
        <end position="209"/>
    </location>
</feature>
<feature type="repeat" description="8">
    <location>
        <begin position="210"/>
        <end position="231"/>
    </location>
</feature>
<feature type="repeat" description="9; half-length">
    <location>
        <begin position="232"/>
        <end position="242"/>
    </location>
</feature>
<feature type="repeat" description="10">
    <location>
        <begin position="243"/>
        <end position="265"/>
    </location>
</feature>
<feature type="region of interest" description="10 X approximate tandem repeats">
    <location>
        <begin position="67"/>
        <end position="265"/>
    </location>
</feature>
<feature type="modified residue" description="Methionine sulfoxide" evidence="1">
    <location>
        <position position="193"/>
    </location>
</feature>
<feature type="modified residue" description="Methionine sulfoxide" evidence="1">
    <location>
        <position position="242"/>
    </location>
</feature>
<feature type="modified residue" description="Methionine sulfoxide" evidence="1">
    <location>
        <position position="244"/>
    </location>
</feature>
<name>APOA1_TUPBE</name>
<sequence length="265" mass="30332">MKAVVLTLAVLFLTGSQARHFWQQDEPQSSWDRVRDLANVYVDAVKESGREYVSQLEASALGKQLNLKLVDNWDTLGSTFQKVHEHLGPVAQEFWEKLEKETEELRREINKDLEDVRQKTQPFLDEIQKKWQEDLERYRQKVEPLSAQLREGARQKLMELQEQVTPLGEDLRDSVRAYADTLRTQLAPYSEQMRKTLGARLEAIKEGGSASLAEYHAKASEQLSALGEKAKPVLEDIHQGLMPMWESFKTGVLNVIDEAAKKLTA</sequence>
<keyword id="KW-0153">Cholesterol metabolism</keyword>
<keyword id="KW-0325">Glycoprotein</keyword>
<keyword id="KW-0345">HDL</keyword>
<keyword id="KW-0443">Lipid metabolism</keyword>
<keyword id="KW-0445">Lipid transport</keyword>
<keyword id="KW-0449">Lipoprotein</keyword>
<keyword id="KW-0558">Oxidation</keyword>
<keyword id="KW-0564">Palmitate</keyword>
<keyword id="KW-0597">Phosphoprotein</keyword>
<keyword id="KW-0677">Repeat</keyword>
<keyword id="KW-0964">Secreted</keyword>
<keyword id="KW-0732">Signal</keyword>
<keyword id="KW-0753">Steroid metabolism</keyword>
<keyword id="KW-1207">Sterol metabolism</keyword>
<keyword id="KW-0813">Transport</keyword>
<evidence type="ECO:0000250" key="1"/>
<evidence type="ECO:0000250" key="2">
    <source>
        <dbReference type="UniProtKB" id="G5BQH5"/>
    </source>
</evidence>
<evidence type="ECO:0000250" key="3">
    <source>
        <dbReference type="UniProtKB" id="P02647"/>
    </source>
</evidence>
<evidence type="ECO:0000250" key="4">
    <source>
        <dbReference type="UniProtKB" id="P04639"/>
    </source>
</evidence>
<evidence type="ECO:0000305" key="5"/>
<gene>
    <name type="primary">APOA1</name>
</gene>